<accession>A8FP22</accession>
<proteinExistence type="inferred from homology"/>
<gene>
    <name evidence="1" type="primary">rpsJ</name>
    <name type="ordered locus">C8J_1612</name>
</gene>
<name>RS10_CAMJ8</name>
<organism>
    <name type="scientific">Campylobacter jejuni subsp. jejuni serotype O:6 (strain 81116 / NCTC 11828)</name>
    <dbReference type="NCBI Taxonomy" id="407148"/>
    <lineage>
        <taxon>Bacteria</taxon>
        <taxon>Pseudomonadati</taxon>
        <taxon>Campylobacterota</taxon>
        <taxon>Epsilonproteobacteria</taxon>
        <taxon>Campylobacterales</taxon>
        <taxon>Campylobacteraceae</taxon>
        <taxon>Campylobacter</taxon>
    </lineage>
</organism>
<feature type="chain" id="PRO_1000072460" description="Small ribosomal subunit protein uS10">
    <location>
        <begin position="1"/>
        <end position="103"/>
    </location>
</feature>
<keyword id="KW-0687">Ribonucleoprotein</keyword>
<keyword id="KW-0689">Ribosomal protein</keyword>
<evidence type="ECO:0000255" key="1">
    <source>
        <dbReference type="HAMAP-Rule" id="MF_00508"/>
    </source>
</evidence>
<evidence type="ECO:0000305" key="2"/>
<reference key="1">
    <citation type="journal article" date="2007" name="J. Bacteriol.">
        <title>The complete genome sequence of Campylobacter jejuni strain 81116 (NCTC11828).</title>
        <authorList>
            <person name="Pearson B.M."/>
            <person name="Gaskin D.J.H."/>
            <person name="Segers R.P.A.M."/>
            <person name="Wells J.M."/>
            <person name="Nuijten P.J.M."/>
            <person name="van Vliet A.H.M."/>
        </authorList>
    </citation>
    <scope>NUCLEOTIDE SEQUENCE [LARGE SCALE GENOMIC DNA]</scope>
    <source>
        <strain>81116 / NCTC 11828</strain>
    </source>
</reference>
<sequence length="103" mass="11673">MERIRLKLKAYDHRVLDRTVAAIVEAVKRTGADIRGPIPMPTKIKRYTVLKSPHINKDSREQFEIRIHARMLDIVAATPDTVDSLTKLDLAPEVSVEVRAMGK</sequence>
<dbReference type="EMBL" id="CP000814">
    <property type="protein sequence ID" value="ABV53209.1"/>
    <property type="molecule type" value="Genomic_DNA"/>
</dbReference>
<dbReference type="RefSeq" id="WP_002779353.1">
    <property type="nucleotide sequence ID" value="NC_009839.1"/>
</dbReference>
<dbReference type="SMR" id="A8FP22"/>
<dbReference type="GeneID" id="98395699"/>
<dbReference type="KEGG" id="cju:C8J_1612"/>
<dbReference type="HOGENOM" id="CLU_122625_1_2_7"/>
<dbReference type="GO" id="GO:1990904">
    <property type="term" value="C:ribonucleoprotein complex"/>
    <property type="evidence" value="ECO:0007669"/>
    <property type="project" value="UniProtKB-KW"/>
</dbReference>
<dbReference type="GO" id="GO:0005840">
    <property type="term" value="C:ribosome"/>
    <property type="evidence" value="ECO:0007669"/>
    <property type="project" value="UniProtKB-KW"/>
</dbReference>
<dbReference type="GO" id="GO:0003735">
    <property type="term" value="F:structural constituent of ribosome"/>
    <property type="evidence" value="ECO:0007669"/>
    <property type="project" value="InterPro"/>
</dbReference>
<dbReference type="GO" id="GO:0000049">
    <property type="term" value="F:tRNA binding"/>
    <property type="evidence" value="ECO:0007669"/>
    <property type="project" value="UniProtKB-UniRule"/>
</dbReference>
<dbReference type="GO" id="GO:0006412">
    <property type="term" value="P:translation"/>
    <property type="evidence" value="ECO:0007669"/>
    <property type="project" value="UniProtKB-UniRule"/>
</dbReference>
<dbReference type="FunFam" id="3.30.70.600:FF:000003">
    <property type="entry name" value="30S ribosomal protein S10"/>
    <property type="match status" value="1"/>
</dbReference>
<dbReference type="Gene3D" id="3.30.70.600">
    <property type="entry name" value="Ribosomal protein S10 domain"/>
    <property type="match status" value="1"/>
</dbReference>
<dbReference type="HAMAP" id="MF_00508">
    <property type="entry name" value="Ribosomal_uS10"/>
    <property type="match status" value="1"/>
</dbReference>
<dbReference type="InterPro" id="IPR001848">
    <property type="entry name" value="Ribosomal_uS10"/>
</dbReference>
<dbReference type="InterPro" id="IPR018268">
    <property type="entry name" value="Ribosomal_uS10_CS"/>
</dbReference>
<dbReference type="InterPro" id="IPR027486">
    <property type="entry name" value="Ribosomal_uS10_dom"/>
</dbReference>
<dbReference type="InterPro" id="IPR036838">
    <property type="entry name" value="Ribosomal_uS10_dom_sf"/>
</dbReference>
<dbReference type="NCBIfam" id="NF001861">
    <property type="entry name" value="PRK00596.1"/>
    <property type="match status" value="1"/>
</dbReference>
<dbReference type="NCBIfam" id="TIGR01049">
    <property type="entry name" value="rpsJ_bact"/>
    <property type="match status" value="1"/>
</dbReference>
<dbReference type="PANTHER" id="PTHR11700">
    <property type="entry name" value="30S RIBOSOMAL PROTEIN S10 FAMILY MEMBER"/>
    <property type="match status" value="1"/>
</dbReference>
<dbReference type="Pfam" id="PF00338">
    <property type="entry name" value="Ribosomal_S10"/>
    <property type="match status" value="1"/>
</dbReference>
<dbReference type="PRINTS" id="PR00971">
    <property type="entry name" value="RIBOSOMALS10"/>
</dbReference>
<dbReference type="SMART" id="SM01403">
    <property type="entry name" value="Ribosomal_S10"/>
    <property type="match status" value="1"/>
</dbReference>
<dbReference type="SUPFAM" id="SSF54999">
    <property type="entry name" value="Ribosomal protein S10"/>
    <property type="match status" value="1"/>
</dbReference>
<dbReference type="PROSITE" id="PS00361">
    <property type="entry name" value="RIBOSOMAL_S10"/>
    <property type="match status" value="1"/>
</dbReference>
<comment type="function">
    <text evidence="1">Involved in the binding of tRNA to the ribosomes.</text>
</comment>
<comment type="subunit">
    <text evidence="1">Part of the 30S ribosomal subunit.</text>
</comment>
<comment type="similarity">
    <text evidence="1">Belongs to the universal ribosomal protein uS10 family.</text>
</comment>
<protein>
    <recommendedName>
        <fullName evidence="1">Small ribosomal subunit protein uS10</fullName>
    </recommendedName>
    <alternativeName>
        <fullName evidence="2">30S ribosomal protein S10</fullName>
    </alternativeName>
</protein>